<feature type="transit peptide" description="Mitochondrion" evidence="1">
    <location>
        <begin position="1"/>
        <end position="29"/>
    </location>
</feature>
<feature type="chain" id="PRO_0000025490" description="Peptidyl-prolyl cis-trans isomerase F, mitochondrial">
    <location>
        <begin position="30"/>
        <end position="206"/>
    </location>
</feature>
<feature type="domain" description="PPIase cyclophilin-type" evidence="4">
    <location>
        <begin position="48"/>
        <end position="204"/>
    </location>
</feature>
<feature type="modified residue" description="N6-acetyllysine; alternate" evidence="17">
    <location>
        <position position="66"/>
    </location>
</feature>
<feature type="modified residue" description="N6-succinyllysine; alternate" evidence="18">
    <location>
        <position position="66"/>
    </location>
</feature>
<feature type="modified residue" description="N6-succinyllysine" evidence="18">
    <location>
        <position position="85"/>
    </location>
</feature>
<feature type="modified residue" description="N6-acetyllysine" evidence="11">
    <location>
        <position position="166"/>
    </location>
</feature>
<feature type="modified residue" description="N6-succinyllysine" evidence="18">
    <location>
        <position position="174"/>
    </location>
</feature>
<feature type="modified residue" description="N6-succinyllysine" evidence="18">
    <location>
        <position position="189"/>
    </location>
</feature>
<feature type="modified residue" description="S-nitrosocysteine" evidence="13">
    <location>
        <position position="202"/>
    </location>
</feature>
<reference key="1">
    <citation type="journal article" date="2004" name="Genome Res.">
        <title>The status, quality, and expansion of the NIH full-length cDNA project: the Mammalian Gene Collection (MGC).</title>
        <authorList>
            <consortium name="The MGC Project Team"/>
        </authorList>
    </citation>
    <scope>NUCLEOTIDE SEQUENCE [LARGE SCALE MRNA]</scope>
    <source>
        <tissue>Mammary tumor</tissue>
    </source>
</reference>
<reference key="2">
    <citation type="journal article" date="2005" name="Nature">
        <title>Cyclophilin D-dependent mitochondrial permeability transition regulates some necrotic but not apoptotic cell death.</title>
        <authorList>
            <person name="Nakagawa T."/>
            <person name="Shimizu S."/>
            <person name="Watanabe T."/>
            <person name="Yamaguchi O."/>
            <person name="Otsu K."/>
            <person name="Yamagata H."/>
            <person name="Inohara H."/>
            <person name="Kubo T."/>
            <person name="Tsujimoto Y."/>
        </authorList>
    </citation>
    <scope>FUNCTION</scope>
    <scope>DISRUPTION PHENOTYPE</scope>
</reference>
<reference key="3">
    <citation type="journal article" date="2005" name="Nature">
        <title>Loss of cyclophilin D reveals a critical role for mitochondrial permeability transition in cell death.</title>
        <authorList>
            <person name="Baines C.P."/>
            <person name="Kaiser R.A."/>
            <person name="Purcell N.H."/>
            <person name="Blair N.S."/>
            <person name="Osinska H."/>
            <person name="Hambleton M.A."/>
            <person name="Brunskill E.W."/>
            <person name="Sayen M.R."/>
            <person name="Gottlieb R.A."/>
            <person name="Dorn G.W."/>
            <person name="Robbins J."/>
            <person name="Molkentin J.D."/>
        </authorList>
    </citation>
    <scope>FUNCTION</scope>
    <scope>DISRUPTION PHENOTYPE</scope>
</reference>
<reference key="4">
    <citation type="journal article" date="2005" name="Proc. Natl. Acad. Sci. U.S.A.">
        <title>Cyclophilin D is a component of mitochondrial permeability transition and mediates neuronal cell death after focal cerebral ischemia.</title>
        <authorList>
            <person name="Schinzel A.C."/>
            <person name="Takeuchi O."/>
            <person name="Huang Z."/>
            <person name="Fisher J.K."/>
            <person name="Zhou Z."/>
            <person name="Rubens J."/>
            <person name="Hetz C."/>
            <person name="Danial N.N."/>
            <person name="Moskowitz M.A."/>
            <person name="Korsmeyer S.J."/>
        </authorList>
    </citation>
    <scope>FUNCTION</scope>
    <scope>DISRUPTION PHENOTYPE</scope>
</reference>
<reference key="5">
    <citation type="journal article" date="2008" name="J. Biol. Chem.">
        <title>Phosphate is essential for inhibition of the mitochondrial permeability transition pore by cyclosporin A and by cyclophilin D ablation.</title>
        <authorList>
            <person name="Basso E."/>
            <person name="Petronilli V."/>
            <person name="Forte M.A."/>
            <person name="Bernardi P."/>
        </authorList>
    </citation>
    <scope>FUNCTION</scope>
</reference>
<reference key="6">
    <citation type="journal article" date="2009" name="J. Biol. Chem.">
        <title>Cyclophilin D modulates mitochondrial F0F1-ATP synthase by interacting with the lateral stalk of the complex.</title>
        <authorList>
            <person name="Giorgio V."/>
            <person name="Bisetto E."/>
            <person name="Soriano M.E."/>
            <person name="Dabbeni-Sala F."/>
            <person name="Basso E."/>
            <person name="Petronilli V."/>
            <person name="Forte M.A."/>
            <person name="Bernardi P."/>
            <person name="Lippe G."/>
        </authorList>
    </citation>
    <scope>FUNCTION</scope>
</reference>
<reference key="7">
    <citation type="journal article" date="2010" name="Aging (Albany NY)">
        <title>Regulation of the mPTP by SIRT3-mediated deacetylation of CypD at lysine 166 suppresses age-related cardiac hypertrophy.</title>
        <authorList>
            <person name="Hafner A.V."/>
            <person name="Dai J."/>
            <person name="Gomes A.P."/>
            <person name="Xiao C.Y."/>
            <person name="Palmeira C.M."/>
            <person name="Rosenzweig A."/>
            <person name="Sinclair D.A."/>
        </authorList>
    </citation>
    <scope>ACETYLATION AT LYS-166</scope>
    <scope>INTERACTION WITH SIRT3</scope>
</reference>
<reference key="8">
    <citation type="journal article" date="2010" name="Cell">
        <title>A tissue-specific atlas of mouse protein phosphorylation and expression.</title>
        <authorList>
            <person name="Huttlin E.L."/>
            <person name="Jedrychowski M.P."/>
            <person name="Elias J.E."/>
            <person name="Goswami T."/>
            <person name="Rad R."/>
            <person name="Beausoleil S.A."/>
            <person name="Villen J."/>
            <person name="Haas W."/>
            <person name="Sowa M.E."/>
            <person name="Gygi S.P."/>
        </authorList>
    </citation>
    <scope>IDENTIFICATION BY MASS SPECTROMETRY [LARGE SCALE ANALYSIS]</scope>
    <source>
        <tissue>Brain</tissue>
        <tissue>Brown adipose tissue</tissue>
        <tissue>Heart</tissue>
        <tissue>Kidney</tissue>
        <tissue>Liver</tissue>
        <tissue>Lung</tissue>
        <tissue>Pancreas</tissue>
        <tissue>Spleen</tissue>
        <tissue>Testis</tissue>
    </source>
</reference>
<reference key="9">
    <citation type="journal article" date="2011" name="Biochem. J.">
        <title>Complement 1q-binding protein inhibits the mitochondrial permeability transition pore and protects against oxidative stress-induced death.</title>
        <authorList>
            <person name="McGee A.M."/>
            <person name="Baines C.P."/>
        </authorList>
    </citation>
    <scope>INTERACTION WITH C1QBP</scope>
</reference>
<reference key="10">
    <citation type="journal article" date="2011" name="FEBS J.">
        <title>Modulation of F0F1-ATP synthase activity by cyclophilin D regulates matrix adenine nucleotide levels.</title>
        <authorList>
            <person name="Chinopoulos C."/>
            <person name="Konrad C."/>
            <person name="Kiss G."/>
            <person name="Metelkin E."/>
            <person name="Torocsik B."/>
            <person name="Zhang S.F."/>
            <person name="Starkov A.A."/>
        </authorList>
    </citation>
    <scope>FUNCTION</scope>
    <scope>INTERACTION WITH ATP5F1B</scope>
</reference>
<reference key="11">
    <citation type="journal article" date="2011" name="J. Biol. Chem.">
        <title>Cysteine 203 of cyclophilin D is critical for cyclophilin D activation of the mitochondrial permeability transition pore.</title>
        <authorList>
            <person name="Nguyen T.T."/>
            <person name="Stevens M.V."/>
            <person name="Kohr M."/>
            <person name="Steenbergen C."/>
            <person name="Sack M.N."/>
            <person name="Murphy E."/>
        </authorList>
    </citation>
    <scope>S-NITROSYLATION AT CYS-202</scope>
</reference>
<reference key="12">
    <citation type="journal article" date="2012" name="Cell">
        <title>p53 opens the mitochondrial permeability transition pore to trigger necrosis.</title>
        <authorList>
            <person name="Vaseva A.V."/>
            <person name="Marchenko N.D."/>
            <person name="Ji K."/>
            <person name="Tsirka S.E."/>
            <person name="Holzmann S."/>
            <person name="Moll U.M."/>
        </authorList>
    </citation>
    <scope>FUNCTION</scope>
    <scope>INTERACTION WITH TP53</scope>
</reference>
<reference key="13">
    <citation type="journal article" date="2013" name="Mol. Cell">
        <title>SIRT5-mediated lysine desuccinylation impacts diverse metabolic pathways.</title>
        <authorList>
            <person name="Park J."/>
            <person name="Chen Y."/>
            <person name="Tishkoff D.X."/>
            <person name="Peng C."/>
            <person name="Tan M."/>
            <person name="Dai L."/>
            <person name="Xie Z."/>
            <person name="Zhang Y."/>
            <person name="Zwaans B.M."/>
            <person name="Skinner M.E."/>
            <person name="Lombard D.B."/>
            <person name="Zhao Y."/>
        </authorList>
    </citation>
    <scope>SUCCINYLATION [LARGE SCALE ANALYSIS] AT LYS-66; LYS-85; LYS-174 AND LYS-189</scope>
    <scope>IDENTIFICATION BY MASS SPECTROMETRY [LARGE SCALE ANALYSIS]</scope>
    <source>
        <tissue>Liver</tissue>
    </source>
</reference>
<reference key="14">
    <citation type="journal article" date="2013" name="Proc. Natl. Acad. Sci. U.S.A.">
        <title>Label-free quantitative proteomics of the lysine acetylome in mitochondria identifies substrates of SIRT3 in metabolic pathways.</title>
        <authorList>
            <person name="Rardin M.J."/>
            <person name="Newman J.C."/>
            <person name="Held J.M."/>
            <person name="Cusack M.P."/>
            <person name="Sorensen D.J."/>
            <person name="Li B."/>
            <person name="Schilling B."/>
            <person name="Mooney S.D."/>
            <person name="Kahn C.R."/>
            <person name="Verdin E."/>
            <person name="Gibson B.W."/>
        </authorList>
    </citation>
    <scope>ACETYLATION [LARGE SCALE ANALYSIS] AT LYS-66</scope>
    <scope>IDENTIFICATION BY MASS SPECTROMETRY [LARGE SCALE ANALYSIS]</scope>
    <source>
        <tissue>Liver</tissue>
    </source>
</reference>
<reference key="15">
    <citation type="journal article" date="2019" name="Sci. Adv.">
        <title>Inhibition of mitochondrial permeability transition by deletion of the ANT family and CypD.</title>
        <authorList>
            <person name="Karch J."/>
            <person name="Bround M.J."/>
            <person name="Khalil H."/>
            <person name="Sargent M.A."/>
            <person name="Latchman N."/>
            <person name="Terada N."/>
            <person name="Peixoto P.M."/>
            <person name="Molkentin J.D."/>
        </authorList>
    </citation>
    <scope>FUNCTION</scope>
    <scope>DISRUPTION PHENOTYPE</scope>
</reference>
<organism>
    <name type="scientific">Mus musculus</name>
    <name type="common">Mouse</name>
    <dbReference type="NCBI Taxonomy" id="10090"/>
    <lineage>
        <taxon>Eukaryota</taxon>
        <taxon>Metazoa</taxon>
        <taxon>Chordata</taxon>
        <taxon>Craniata</taxon>
        <taxon>Vertebrata</taxon>
        <taxon>Euteleostomi</taxon>
        <taxon>Mammalia</taxon>
        <taxon>Eutheria</taxon>
        <taxon>Euarchontoglires</taxon>
        <taxon>Glires</taxon>
        <taxon>Rodentia</taxon>
        <taxon>Myomorpha</taxon>
        <taxon>Muroidea</taxon>
        <taxon>Muridae</taxon>
        <taxon>Murinae</taxon>
        <taxon>Mus</taxon>
        <taxon>Mus</taxon>
    </lineage>
</organism>
<sequence>MLALRCGPRLLGLLSGPRSAPLLLSATRTCSDGGARGANSSSGNPLVYLDVGADGQPLGRVVLELKADVVPKTAENFRALCTGEKGFGYKGSTFHRVIPAFMCQAGDFTNHNGTGGRSIYGSRFPDENFTLKHVGPGVLSMANAGPNTNGSQFFICTIKTDWLDGKHVVFGHVKEGMDVVKKIESFGSKSGKTSKKIVITDCGQLS</sequence>
<proteinExistence type="evidence at protein level"/>
<comment type="function">
    <text evidence="2 3 5 6 7 8 9 12 14 15">PPIase that catalyzes the cis-trans isomerization of proline imidic peptide bonds in oligopeptides and may therefore assist protein folding (By similarity). Involved in regulation of the mitochondrial permeability transition pore (mPTP) (PubMed:15800626, PubMed:15800627, PubMed:16103352, PubMed:18684715, PubMed:31489369). It is proposed that its association with the mPTP is masking a binding site for inhibiting inorganic phosphate (Pi) and promotes the open probability of the mPTP leading to apoptosis or necrosis; the requirement of the PPIase activity for this function is debated (PubMed:15800626, PubMed:15800627, PubMed:16103352, PubMed:18684715, PubMed:31489369). In cooperation with mitochondrial p53/TP53 is involved in activating oxidative stress-induced necrosis (PubMed:22726440). Involved in modulation of mitochondrial membrane F(1)F(0) ATP synthase activity and regulation of mitochondrial matrix adenine nucleotide levels (PubMed:19801635, PubMed:21281446). Has anti-apoptotic activity independently of mPTP and in cooperation with BCL2 inhibits cytochrome c-dependent apoptosis (By similarity).</text>
</comment>
<comment type="catalytic activity">
    <reaction evidence="3">
        <text>[protein]-peptidylproline (omega=180) = [protein]-peptidylproline (omega=0)</text>
        <dbReference type="Rhea" id="RHEA:16237"/>
        <dbReference type="Rhea" id="RHEA-COMP:10747"/>
        <dbReference type="Rhea" id="RHEA-COMP:10748"/>
        <dbReference type="ChEBI" id="CHEBI:83833"/>
        <dbReference type="ChEBI" id="CHEBI:83834"/>
        <dbReference type="EC" id="5.2.1.8"/>
    </reaction>
</comment>
<comment type="activity regulation">
    <text evidence="3">Binds cyclosporin A (CsA). Is displaced by CsA from the mPTP leading to a lower open probability of the mPTP.</text>
</comment>
<comment type="subunit">
    <text evidence="2 3 9 10 12 14">Associates with the mitochondrial membrane ATP synthase F(1)F(0) ATP synthase; the association is increased by inorganic phosphate (Pi) and decreased by cyclosporin A (CsA) (PubMed:19801635). Interacts with ATP5F1B; ATP5PD and ATP5PO (PubMed:21281446). Interacts with SLC25A3; the interaction is impaired by CsA (By similarity). Interacts with BCL2; the interaction is impaired by CsA. Interacts with TP53; the association implicates preferentially tetrameric TP53, is induced by oxidative stress and is impaired by CsA (PubMed:22726440). Interacts with C1QBP (PubMed:20950273). Interacts with MCUR1 (By similarity). Component of the mitochondrial permeability transition pore complex (mPTPC), at least composed of SPG7, VDAC1 and PPIF (By similarity). Interacts with SPG7 (By similarity).</text>
</comment>
<comment type="interaction">
    <interactant intactId="EBI-6455001">
        <id>Q99KR7</id>
    </interactant>
    <interactant intactId="EBI-474016">
        <id>P02340</id>
        <label>Tp53</label>
    </interactant>
    <organismsDiffer>false</organismsDiffer>
    <experiments>2</experiments>
</comment>
<comment type="interaction">
    <interactant intactId="EBI-6455001">
        <id>Q99KR7</id>
    </interactant>
    <interactant intactId="EBI-640741">
        <id>P01023</id>
        <label>A2M</label>
    </interactant>
    <organismsDiffer>true</organismsDiffer>
    <experiments>3</experiments>
</comment>
<comment type="interaction">
    <interactant intactId="EBI-6455001">
        <id>Q99KR7</id>
    </interactant>
    <interactant intactId="EBI-10968534">
        <id>P50570-2</id>
        <label>DNM2</label>
    </interactant>
    <organismsDiffer>true</organismsDiffer>
    <experiments>3</experiments>
</comment>
<comment type="interaction">
    <interactant intactId="EBI-6455001">
        <id>Q99KR7</id>
    </interactant>
    <interactant intactId="EBI-466029">
        <id>P42858</id>
        <label>HTT</label>
    </interactant>
    <organismsDiffer>true</organismsDiffer>
    <experiments>3</experiments>
</comment>
<comment type="subcellular location">
    <subcellularLocation>
        <location evidence="2">Mitochondrion matrix</location>
    </subcellularLocation>
</comment>
<comment type="PTM">
    <text evidence="11">Acetylated at Lys-166; deacetylated at Lys-166 by SIRT3.</text>
</comment>
<comment type="disruption phenotype">
    <text evidence="5 6 7 15">Mice are developmentally normal and show no apparent anomalies (PubMed:15800626, PubMed:15800627, PubMed:16103352). Mitochondria do not undergo cyclosporin A-sensitive mitochondrial permeability transtition (PubMed:15800626, PubMed:15800627, PubMed:16103352). Cells show resistance to necrotic cell death induced by reactive oxygen species and Ca(2+) overload, and animals show a high level of resistance to ischaemia/reperfusion-induced cardiac injury (PubMed:15800626, PubMed:15800627, PubMed:16103352). Mice show a dramatic reduction in brain infarct size after acute middle cerebral artery occlusion and reperfusion (PubMed:15800626, PubMed:15800627, PubMed:16103352). Mice lacking Slc25a4/Ant1, Slc25a5/Ant2, Slc25a31/Ant4 and Ppif lack Ca(2+)-induced mitochondrial permeability transition pore (mPTP) formation (PubMed:31489369).</text>
</comment>
<comment type="similarity">
    <text evidence="16">Belongs to the cyclophilin-type PPIase family.</text>
</comment>
<keyword id="KW-0007">Acetylation</keyword>
<keyword id="KW-0053">Apoptosis</keyword>
<keyword id="KW-0413">Isomerase</keyword>
<keyword id="KW-0496">Mitochondrion</keyword>
<keyword id="KW-1210">Necrosis</keyword>
<keyword id="KW-1185">Reference proteome</keyword>
<keyword id="KW-0697">Rotamase</keyword>
<keyword id="KW-0702">S-nitrosylation</keyword>
<keyword id="KW-0809">Transit peptide</keyword>
<gene>
    <name type="primary">Ppif</name>
</gene>
<evidence type="ECO:0000250" key="1"/>
<evidence type="ECO:0000250" key="2">
    <source>
        <dbReference type="UniProtKB" id="P29117"/>
    </source>
</evidence>
<evidence type="ECO:0000250" key="3">
    <source>
        <dbReference type="UniProtKB" id="P30405"/>
    </source>
</evidence>
<evidence type="ECO:0000255" key="4">
    <source>
        <dbReference type="PROSITE-ProRule" id="PRU00156"/>
    </source>
</evidence>
<evidence type="ECO:0000269" key="5">
    <source>
    </source>
</evidence>
<evidence type="ECO:0000269" key="6">
    <source>
    </source>
</evidence>
<evidence type="ECO:0000269" key="7">
    <source>
    </source>
</evidence>
<evidence type="ECO:0000269" key="8">
    <source>
    </source>
</evidence>
<evidence type="ECO:0000269" key="9">
    <source>
    </source>
</evidence>
<evidence type="ECO:0000269" key="10">
    <source>
    </source>
</evidence>
<evidence type="ECO:0000269" key="11">
    <source>
    </source>
</evidence>
<evidence type="ECO:0000269" key="12">
    <source>
    </source>
</evidence>
<evidence type="ECO:0000269" key="13">
    <source>
    </source>
</evidence>
<evidence type="ECO:0000269" key="14">
    <source>
    </source>
</evidence>
<evidence type="ECO:0000269" key="15">
    <source>
    </source>
</evidence>
<evidence type="ECO:0000305" key="16"/>
<evidence type="ECO:0007744" key="17">
    <source>
    </source>
</evidence>
<evidence type="ECO:0007744" key="18">
    <source>
    </source>
</evidence>
<protein>
    <recommendedName>
        <fullName>Peptidyl-prolyl cis-trans isomerase F, mitochondrial</fullName>
        <shortName>PPIase F</shortName>
        <ecNumber evidence="3">5.2.1.8</ecNumber>
    </recommendedName>
    <alternativeName>
        <fullName>Cyclophilin D</fullName>
        <shortName>CyP-D</shortName>
        <shortName>CypD</shortName>
    </alternativeName>
    <alternativeName>
        <fullName>Cyclophilin F</fullName>
    </alternativeName>
    <alternativeName>
        <fullName>Rotamase F</fullName>
    </alternativeName>
</protein>
<accession>Q99KR7</accession>
<dbReference type="EC" id="5.2.1.8" evidence="3"/>
<dbReference type="EMBL" id="BC004041">
    <property type="protein sequence ID" value="AAH04041.1"/>
    <property type="molecule type" value="mRNA"/>
</dbReference>
<dbReference type="CCDS" id="CCDS26874.1"/>
<dbReference type="RefSeq" id="NP_598845.1">
    <property type="nucleotide sequence ID" value="NM_134084.1"/>
</dbReference>
<dbReference type="RefSeq" id="XP_030103456.1">
    <property type="nucleotide sequence ID" value="XM_030247596.1"/>
</dbReference>
<dbReference type="BMRB" id="Q99KR7"/>
<dbReference type="SMR" id="Q99KR7"/>
<dbReference type="BioGRID" id="222896">
    <property type="interactions" value="26"/>
</dbReference>
<dbReference type="FunCoup" id="Q99KR7">
    <property type="interactions" value="2223"/>
</dbReference>
<dbReference type="IntAct" id="Q99KR7">
    <property type="interactions" value="9"/>
</dbReference>
<dbReference type="MINT" id="Q99KR7"/>
<dbReference type="STRING" id="10090.ENSMUSP00000022419"/>
<dbReference type="ChEMBL" id="CHEMBL3804752"/>
<dbReference type="GlyGen" id="Q99KR7">
    <property type="glycosylation" value="3 sites, 2 N-linked glycans (2 sites), 1 O-linked glycan (1 site)"/>
</dbReference>
<dbReference type="iPTMnet" id="Q99KR7"/>
<dbReference type="PhosphoSitePlus" id="Q99KR7"/>
<dbReference type="SwissPalm" id="Q99KR7"/>
<dbReference type="jPOST" id="Q99KR7"/>
<dbReference type="PaxDb" id="10090-ENSMUSP00000022419"/>
<dbReference type="PeptideAtlas" id="Q99KR7"/>
<dbReference type="ProteomicsDB" id="291833"/>
<dbReference type="Pumba" id="Q99KR7"/>
<dbReference type="Antibodypedia" id="29865">
    <property type="antibodies" value="442 antibodies from 34 providers"/>
</dbReference>
<dbReference type="DNASU" id="105675"/>
<dbReference type="Ensembl" id="ENSMUST00000022419.7">
    <property type="protein sequence ID" value="ENSMUSP00000022419.7"/>
    <property type="gene ID" value="ENSMUSG00000021868.8"/>
</dbReference>
<dbReference type="GeneID" id="105675"/>
<dbReference type="KEGG" id="mmu:105675"/>
<dbReference type="UCSC" id="uc007srr.1">
    <property type="organism name" value="mouse"/>
</dbReference>
<dbReference type="AGR" id="MGI:2145814"/>
<dbReference type="CTD" id="10105"/>
<dbReference type="MGI" id="MGI:2145814">
    <property type="gene designation" value="Ppif"/>
</dbReference>
<dbReference type="VEuPathDB" id="HostDB:ENSMUSG00000021868"/>
<dbReference type="eggNOG" id="KOG0865">
    <property type="taxonomic scope" value="Eukaryota"/>
</dbReference>
<dbReference type="GeneTree" id="ENSGT00940000156008"/>
<dbReference type="HOGENOM" id="CLU_012062_4_3_1"/>
<dbReference type="InParanoid" id="Q99KR7"/>
<dbReference type="OMA" id="FKSIVPR"/>
<dbReference type="OrthoDB" id="193499at2759"/>
<dbReference type="PhylomeDB" id="Q99KR7"/>
<dbReference type="TreeFam" id="TF312801"/>
<dbReference type="BioGRID-ORCS" id="105675">
    <property type="hits" value="3 hits in 78 CRISPR screens"/>
</dbReference>
<dbReference type="PRO" id="PR:Q99KR7"/>
<dbReference type="Proteomes" id="UP000000589">
    <property type="component" value="Chromosome 14"/>
</dbReference>
<dbReference type="RNAct" id="Q99KR7">
    <property type="molecule type" value="protein"/>
</dbReference>
<dbReference type="Bgee" id="ENSMUSG00000021868">
    <property type="expression patterns" value="Expressed in pyloric antrum and 257 other cell types or tissues"/>
</dbReference>
<dbReference type="GO" id="GO:0005759">
    <property type="term" value="C:mitochondrial matrix"/>
    <property type="evidence" value="ECO:0007669"/>
    <property type="project" value="UniProtKB-SubCell"/>
</dbReference>
<dbReference type="GO" id="GO:0005757">
    <property type="term" value="C:mitochondrial permeability transition pore complex"/>
    <property type="evidence" value="ECO:0000315"/>
    <property type="project" value="UniProtKB"/>
</dbReference>
<dbReference type="GO" id="GO:0005739">
    <property type="term" value="C:mitochondrion"/>
    <property type="evidence" value="ECO:0007005"/>
    <property type="project" value="MGI"/>
</dbReference>
<dbReference type="GO" id="GO:0003755">
    <property type="term" value="F:peptidyl-prolyl cis-trans isomerase activity"/>
    <property type="evidence" value="ECO:0000250"/>
    <property type="project" value="UniProtKB"/>
</dbReference>
<dbReference type="GO" id="GO:0008637">
    <property type="term" value="P:apoptotic mitochondrial changes"/>
    <property type="evidence" value="ECO:0000316"/>
    <property type="project" value="MGI"/>
</dbReference>
<dbReference type="GO" id="GO:0006915">
    <property type="term" value="P:apoptotic process"/>
    <property type="evidence" value="ECO:0000316"/>
    <property type="project" value="MGI"/>
</dbReference>
<dbReference type="GO" id="GO:0071243">
    <property type="term" value="P:cellular response to arsenic-containing substance"/>
    <property type="evidence" value="ECO:0000315"/>
    <property type="project" value="UniProtKB"/>
</dbReference>
<dbReference type="GO" id="GO:0071277">
    <property type="term" value="P:cellular response to calcium ion"/>
    <property type="evidence" value="ECO:0000315"/>
    <property type="project" value="UniProtKB"/>
</dbReference>
<dbReference type="GO" id="GO:0070301">
    <property type="term" value="P:cellular response to hydrogen peroxide"/>
    <property type="evidence" value="ECO:0000315"/>
    <property type="project" value="UniProtKB"/>
</dbReference>
<dbReference type="GO" id="GO:0051882">
    <property type="term" value="P:mitochondrial depolarization"/>
    <property type="evidence" value="ECO:0000316"/>
    <property type="project" value="MGI"/>
</dbReference>
<dbReference type="GO" id="GO:1902686">
    <property type="term" value="P:mitochondrial outer membrane permeabilization involved in programmed cell death"/>
    <property type="evidence" value="ECO:0000250"/>
    <property type="project" value="UniProtKB"/>
</dbReference>
<dbReference type="GO" id="GO:0007005">
    <property type="term" value="P:mitochondrion organization"/>
    <property type="evidence" value="ECO:0000316"/>
    <property type="project" value="MGI"/>
</dbReference>
<dbReference type="GO" id="GO:0061061">
    <property type="term" value="P:muscle structure development"/>
    <property type="evidence" value="ECO:0000316"/>
    <property type="project" value="MGI"/>
</dbReference>
<dbReference type="GO" id="GO:0070266">
    <property type="term" value="P:necroptotic process"/>
    <property type="evidence" value="ECO:0000316"/>
    <property type="project" value="MGI"/>
</dbReference>
<dbReference type="GO" id="GO:0043066">
    <property type="term" value="P:negative regulation of apoptotic process"/>
    <property type="evidence" value="ECO:0000250"/>
    <property type="project" value="UniProtKB"/>
</dbReference>
<dbReference type="GO" id="GO:0032780">
    <property type="term" value="P:negative regulation of ATP-dependent activity"/>
    <property type="evidence" value="ECO:0000315"/>
    <property type="project" value="UniProtKB"/>
</dbReference>
<dbReference type="GO" id="GO:2001243">
    <property type="term" value="P:negative regulation of intrinsic apoptotic signaling pathway"/>
    <property type="evidence" value="ECO:0000250"/>
    <property type="project" value="UniProtKB"/>
</dbReference>
<dbReference type="GO" id="GO:0090324">
    <property type="term" value="P:negative regulation of oxidative phosphorylation"/>
    <property type="evidence" value="ECO:0000315"/>
    <property type="project" value="UniProtKB"/>
</dbReference>
<dbReference type="GO" id="GO:2000276">
    <property type="term" value="P:negative regulation of oxidative phosphorylation uncoupler activity"/>
    <property type="evidence" value="ECO:0000315"/>
    <property type="project" value="UniProtKB"/>
</dbReference>
<dbReference type="GO" id="GO:0090201">
    <property type="term" value="P:negative regulation of release of cytochrome c from mitochondria"/>
    <property type="evidence" value="ECO:0000250"/>
    <property type="project" value="UniProtKB"/>
</dbReference>
<dbReference type="GO" id="GO:0012501">
    <property type="term" value="P:programmed cell death"/>
    <property type="evidence" value="ECO:0000315"/>
    <property type="project" value="UniProtKB"/>
</dbReference>
<dbReference type="GO" id="GO:0006457">
    <property type="term" value="P:protein folding"/>
    <property type="evidence" value="ECO:0007669"/>
    <property type="project" value="InterPro"/>
</dbReference>
<dbReference type="GO" id="GO:0046902">
    <property type="term" value="P:regulation of mitochondrial membrane permeability"/>
    <property type="evidence" value="ECO:0000315"/>
    <property type="project" value="UniProtKB"/>
</dbReference>
<dbReference type="GO" id="GO:1902445">
    <property type="term" value="P:regulation of mitochondrial membrane permeability involved in programmed necrotic cell death"/>
    <property type="evidence" value="ECO:0000315"/>
    <property type="project" value="UniProtKB"/>
</dbReference>
<dbReference type="GO" id="GO:0010849">
    <property type="term" value="P:regulation of proton-transporting ATPase activity, rotational mechanism"/>
    <property type="evidence" value="ECO:0000315"/>
    <property type="project" value="UniProtKB"/>
</dbReference>
<dbReference type="GO" id="GO:0002931">
    <property type="term" value="P:response to ischemia"/>
    <property type="evidence" value="ECO:0000315"/>
    <property type="project" value="UniProtKB"/>
</dbReference>
<dbReference type="GO" id="GO:0006979">
    <property type="term" value="P:response to oxidative stress"/>
    <property type="evidence" value="ECO:0000316"/>
    <property type="project" value="MGI"/>
</dbReference>
<dbReference type="GO" id="GO:0098528">
    <property type="term" value="P:skeletal muscle fiber differentiation"/>
    <property type="evidence" value="ECO:0000316"/>
    <property type="project" value="MGI"/>
</dbReference>
<dbReference type="CDD" id="cd01926">
    <property type="entry name" value="cyclophilin_ABH_like"/>
    <property type="match status" value="1"/>
</dbReference>
<dbReference type="FunFam" id="2.40.100.10:FF:000002">
    <property type="entry name" value="Peptidyl-prolyl cis-trans isomerase"/>
    <property type="match status" value="1"/>
</dbReference>
<dbReference type="Gene3D" id="2.40.100.10">
    <property type="entry name" value="Cyclophilin-like"/>
    <property type="match status" value="1"/>
</dbReference>
<dbReference type="InterPro" id="IPR029000">
    <property type="entry name" value="Cyclophilin-like_dom_sf"/>
</dbReference>
<dbReference type="InterPro" id="IPR020892">
    <property type="entry name" value="Cyclophilin-type_PPIase_CS"/>
</dbReference>
<dbReference type="InterPro" id="IPR002130">
    <property type="entry name" value="Cyclophilin-type_PPIase_dom"/>
</dbReference>
<dbReference type="PANTHER" id="PTHR11071">
    <property type="entry name" value="PEPTIDYL-PROLYL CIS-TRANS ISOMERASE"/>
    <property type="match status" value="1"/>
</dbReference>
<dbReference type="PANTHER" id="PTHR11071:SF408">
    <property type="entry name" value="PEPTIDYL-PROLYL CIS-TRANS ISOMERASE F, MITOCHONDRIAL"/>
    <property type="match status" value="1"/>
</dbReference>
<dbReference type="Pfam" id="PF00160">
    <property type="entry name" value="Pro_isomerase"/>
    <property type="match status" value="1"/>
</dbReference>
<dbReference type="PRINTS" id="PR00153">
    <property type="entry name" value="CSAPPISMRASE"/>
</dbReference>
<dbReference type="SUPFAM" id="SSF50891">
    <property type="entry name" value="Cyclophilin-like"/>
    <property type="match status" value="1"/>
</dbReference>
<dbReference type="PROSITE" id="PS00170">
    <property type="entry name" value="CSA_PPIASE_1"/>
    <property type="match status" value="1"/>
</dbReference>
<dbReference type="PROSITE" id="PS50072">
    <property type="entry name" value="CSA_PPIASE_2"/>
    <property type="match status" value="1"/>
</dbReference>
<name>PPIF_MOUSE</name>